<keyword id="KW-0150">Chloroplast</keyword>
<keyword id="KW-0934">Plastid</keyword>
<keyword id="KW-0687">Ribonucleoprotein</keyword>
<keyword id="KW-0689">Ribosomal protein</keyword>
<keyword id="KW-0694">RNA-binding</keyword>
<keyword id="KW-0699">rRNA-binding</keyword>
<name>RR11_PHAAO</name>
<sequence>MTKPIAKISLRKNARIGSNKNERRIPKGVIHVQASFNNTIVTVTDVRGRVVSWASAGTSGFRGTRKGTPYAAQAAAFNAIRTLVDQGMQRAEVMIKGPGLGRDAALRAIRRNGILLSFVRDVTPMPHNGCRPPKKRRV</sequence>
<feature type="chain" id="PRO_0000230455" description="Small ribosomal subunit protein uS11c">
    <location>
        <begin position="1"/>
        <end position="138"/>
    </location>
</feature>
<protein>
    <recommendedName>
        <fullName evidence="1">Small ribosomal subunit protein uS11c</fullName>
    </recommendedName>
    <alternativeName>
        <fullName evidence="2">30S ribosomal protein S11, chloroplastic</fullName>
    </alternativeName>
</protein>
<organism>
    <name type="scientific">Phalaenopsis aphrodite subsp. formosana</name>
    <name type="common">Moth orchid</name>
    <dbReference type="NCBI Taxonomy" id="308872"/>
    <lineage>
        <taxon>Eukaryota</taxon>
        <taxon>Viridiplantae</taxon>
        <taxon>Streptophyta</taxon>
        <taxon>Embryophyta</taxon>
        <taxon>Tracheophyta</taxon>
        <taxon>Spermatophyta</taxon>
        <taxon>Magnoliopsida</taxon>
        <taxon>Liliopsida</taxon>
        <taxon>Asparagales</taxon>
        <taxon>Orchidaceae</taxon>
        <taxon>Epidendroideae</taxon>
        <taxon>Vandeae</taxon>
        <taxon>Aeridinae</taxon>
        <taxon>Phalaenopsis</taxon>
    </lineage>
</organism>
<reference key="1">
    <citation type="journal article" date="2006" name="Mol. Biol. Evol.">
        <title>The chloroplast genome of Phalaenopsis aphrodite (Orchidaceae): comparative analysis of evolutionary rate with that of grasses and its phylogenetic implications.</title>
        <authorList>
            <person name="Chang C.-C."/>
            <person name="Lin H.-C."/>
            <person name="Lin I.-P."/>
            <person name="Chow T.-Y."/>
            <person name="Chen H.-H."/>
            <person name="Chen W.-H."/>
            <person name="Cheng C.-H."/>
            <person name="Lin C.-Y."/>
            <person name="Liu S.-M."/>
            <person name="Chang C.-C."/>
            <person name="Chaw S.-M."/>
        </authorList>
    </citation>
    <scope>NUCLEOTIDE SEQUENCE [LARGE SCALE GENOMIC DNA]</scope>
    <source>
        <strain>cv. Taisugar TS-97</strain>
    </source>
</reference>
<dbReference type="EMBL" id="AY916449">
    <property type="protein sequence ID" value="AAW82532.1"/>
    <property type="molecule type" value="Genomic_DNA"/>
</dbReference>
<dbReference type="RefSeq" id="YP_358614.1">
    <property type="nucleotide sequence ID" value="NC_007499.1"/>
</dbReference>
<dbReference type="SMR" id="Q3BAK4"/>
<dbReference type="GeneID" id="3741713"/>
<dbReference type="GO" id="GO:0009507">
    <property type="term" value="C:chloroplast"/>
    <property type="evidence" value="ECO:0007669"/>
    <property type="project" value="UniProtKB-SubCell"/>
</dbReference>
<dbReference type="GO" id="GO:1990904">
    <property type="term" value="C:ribonucleoprotein complex"/>
    <property type="evidence" value="ECO:0007669"/>
    <property type="project" value="UniProtKB-KW"/>
</dbReference>
<dbReference type="GO" id="GO:0005840">
    <property type="term" value="C:ribosome"/>
    <property type="evidence" value="ECO:0007669"/>
    <property type="project" value="UniProtKB-KW"/>
</dbReference>
<dbReference type="GO" id="GO:0019843">
    <property type="term" value="F:rRNA binding"/>
    <property type="evidence" value="ECO:0007669"/>
    <property type="project" value="UniProtKB-UniRule"/>
</dbReference>
<dbReference type="GO" id="GO:0003735">
    <property type="term" value="F:structural constituent of ribosome"/>
    <property type="evidence" value="ECO:0007669"/>
    <property type="project" value="InterPro"/>
</dbReference>
<dbReference type="GO" id="GO:0006412">
    <property type="term" value="P:translation"/>
    <property type="evidence" value="ECO:0007669"/>
    <property type="project" value="UniProtKB-UniRule"/>
</dbReference>
<dbReference type="FunFam" id="3.30.420.80:FF:000003">
    <property type="entry name" value="30S ribosomal protein S11, chloroplastic"/>
    <property type="match status" value="1"/>
</dbReference>
<dbReference type="Gene3D" id="3.30.420.80">
    <property type="entry name" value="Ribosomal protein S11"/>
    <property type="match status" value="1"/>
</dbReference>
<dbReference type="HAMAP" id="MF_01310">
    <property type="entry name" value="Ribosomal_uS11"/>
    <property type="match status" value="1"/>
</dbReference>
<dbReference type="InterPro" id="IPR001971">
    <property type="entry name" value="Ribosomal_uS11"/>
</dbReference>
<dbReference type="InterPro" id="IPR019981">
    <property type="entry name" value="Ribosomal_uS11_bac-type"/>
</dbReference>
<dbReference type="InterPro" id="IPR036967">
    <property type="entry name" value="Ribosomal_uS11_sf"/>
</dbReference>
<dbReference type="NCBIfam" id="NF003698">
    <property type="entry name" value="PRK05309.1"/>
    <property type="match status" value="1"/>
</dbReference>
<dbReference type="NCBIfam" id="TIGR03632">
    <property type="entry name" value="uS11_bact"/>
    <property type="match status" value="1"/>
</dbReference>
<dbReference type="PANTHER" id="PTHR11759">
    <property type="entry name" value="40S RIBOSOMAL PROTEIN S14/30S RIBOSOMAL PROTEIN S11"/>
    <property type="match status" value="1"/>
</dbReference>
<dbReference type="Pfam" id="PF00411">
    <property type="entry name" value="Ribosomal_S11"/>
    <property type="match status" value="1"/>
</dbReference>
<dbReference type="PIRSF" id="PIRSF002131">
    <property type="entry name" value="Ribosomal_S11"/>
    <property type="match status" value="1"/>
</dbReference>
<dbReference type="SUPFAM" id="SSF53137">
    <property type="entry name" value="Translational machinery components"/>
    <property type="match status" value="1"/>
</dbReference>
<comment type="subunit">
    <text evidence="1">Part of the 30S ribosomal subunit.</text>
</comment>
<comment type="subcellular location">
    <subcellularLocation>
        <location>Plastid</location>
        <location>Chloroplast</location>
    </subcellularLocation>
</comment>
<comment type="similarity">
    <text evidence="1">Belongs to the universal ribosomal protein uS11 family.</text>
</comment>
<accession>Q3BAK4</accession>
<geneLocation type="chloroplast"/>
<gene>
    <name evidence="1" type="primary">rps11</name>
</gene>
<evidence type="ECO:0000255" key="1">
    <source>
        <dbReference type="HAMAP-Rule" id="MF_01310"/>
    </source>
</evidence>
<evidence type="ECO:0000305" key="2"/>
<proteinExistence type="inferred from homology"/>